<feature type="chain" id="PRO_1000196505" description="Putative septation protein SpoVG">
    <location>
        <begin position="1"/>
        <end position="92"/>
    </location>
</feature>
<accession>B0KBF4</accession>
<dbReference type="EMBL" id="CP000924">
    <property type="protein sequence ID" value="ABY93833.1"/>
    <property type="molecule type" value="Genomic_DNA"/>
</dbReference>
<dbReference type="RefSeq" id="WP_004399029.1">
    <property type="nucleotide sequence ID" value="NC_010321.1"/>
</dbReference>
<dbReference type="SMR" id="B0KBF4"/>
<dbReference type="STRING" id="340099.Teth39_0160"/>
<dbReference type="KEGG" id="tpd:Teth39_0160"/>
<dbReference type="eggNOG" id="COG2088">
    <property type="taxonomic scope" value="Bacteria"/>
</dbReference>
<dbReference type="HOGENOM" id="CLU_103669_2_1_9"/>
<dbReference type="Proteomes" id="UP000002156">
    <property type="component" value="Chromosome"/>
</dbReference>
<dbReference type="GO" id="GO:0000917">
    <property type="term" value="P:division septum assembly"/>
    <property type="evidence" value="ECO:0007669"/>
    <property type="project" value="UniProtKB-KW"/>
</dbReference>
<dbReference type="GO" id="GO:0030435">
    <property type="term" value="P:sporulation resulting in formation of a cellular spore"/>
    <property type="evidence" value="ECO:0007669"/>
    <property type="project" value="InterPro"/>
</dbReference>
<dbReference type="Gene3D" id="3.30.1120.40">
    <property type="entry name" value="Stage V sporulation protein G"/>
    <property type="match status" value="1"/>
</dbReference>
<dbReference type="HAMAP" id="MF_00819">
    <property type="entry name" value="SpoVG"/>
    <property type="match status" value="1"/>
</dbReference>
<dbReference type="InterPro" id="IPR007170">
    <property type="entry name" value="SpoVG"/>
</dbReference>
<dbReference type="InterPro" id="IPR036751">
    <property type="entry name" value="SpoVG_sf"/>
</dbReference>
<dbReference type="NCBIfam" id="NF009749">
    <property type="entry name" value="PRK13259.1"/>
    <property type="match status" value="1"/>
</dbReference>
<dbReference type="PANTHER" id="PTHR38429">
    <property type="entry name" value="SEPTATION PROTEIN SPOVG-RELATED"/>
    <property type="match status" value="1"/>
</dbReference>
<dbReference type="PANTHER" id="PTHR38429:SF1">
    <property type="entry name" value="SEPTATION PROTEIN SPOVG-RELATED"/>
    <property type="match status" value="1"/>
</dbReference>
<dbReference type="Pfam" id="PF04026">
    <property type="entry name" value="SpoVG"/>
    <property type="match status" value="1"/>
</dbReference>
<dbReference type="SUPFAM" id="SSF160537">
    <property type="entry name" value="SpoVG-like"/>
    <property type="match status" value="1"/>
</dbReference>
<gene>
    <name evidence="1" type="primary">spoVG</name>
    <name type="ordered locus">Teth39_0160</name>
</gene>
<keyword id="KW-0131">Cell cycle</keyword>
<keyword id="KW-0132">Cell division</keyword>
<keyword id="KW-1185">Reference proteome</keyword>
<keyword id="KW-0717">Septation</keyword>
<proteinExistence type="inferred from homology"/>
<comment type="function">
    <text evidence="1">Could be involved in septation.</text>
</comment>
<comment type="similarity">
    <text evidence="1">Belongs to the SpoVG family.</text>
</comment>
<reference key="1">
    <citation type="submission" date="2008-01" db="EMBL/GenBank/DDBJ databases">
        <title>Complete sequence of Thermoanaerobacter pseudethanolicus 39E.</title>
        <authorList>
            <person name="Copeland A."/>
            <person name="Lucas S."/>
            <person name="Lapidus A."/>
            <person name="Barry K."/>
            <person name="Glavina del Rio T."/>
            <person name="Dalin E."/>
            <person name="Tice H."/>
            <person name="Pitluck S."/>
            <person name="Bruce D."/>
            <person name="Goodwin L."/>
            <person name="Saunders E."/>
            <person name="Brettin T."/>
            <person name="Detter J.C."/>
            <person name="Han C."/>
            <person name="Schmutz J."/>
            <person name="Larimer F."/>
            <person name="Land M."/>
            <person name="Hauser L."/>
            <person name="Kyrpides N."/>
            <person name="Lykidis A."/>
            <person name="Hemme C."/>
            <person name="Fields M.W."/>
            <person name="He Z."/>
            <person name="Zhou J."/>
            <person name="Richardson P."/>
        </authorList>
    </citation>
    <scope>NUCLEOTIDE SEQUENCE [LARGE SCALE GENOMIC DNA]</scope>
    <source>
        <strain>ATCC 33223 / DSM 2355 / 39E</strain>
    </source>
</reference>
<organism>
    <name type="scientific">Thermoanaerobacter pseudethanolicus (strain ATCC 33223 / 39E)</name>
    <name type="common">Clostridium thermohydrosulfuricum</name>
    <dbReference type="NCBI Taxonomy" id="340099"/>
    <lineage>
        <taxon>Bacteria</taxon>
        <taxon>Bacillati</taxon>
        <taxon>Bacillota</taxon>
        <taxon>Clostridia</taxon>
        <taxon>Thermoanaerobacterales</taxon>
        <taxon>Thermoanaerobacteraceae</taxon>
        <taxon>Thermoanaerobacter</taxon>
    </lineage>
</organism>
<evidence type="ECO:0000255" key="1">
    <source>
        <dbReference type="HAMAP-Rule" id="MF_00819"/>
    </source>
</evidence>
<name>SP5G_THEP3</name>
<sequence>MEITDVRVRKLNEEGKMKAVVSVTFDNEFVVHDIKVIEGQNGLFIAMPSRKTPEGEFKDIAHPINSDTRNRLQSAILKEYEKAKEQEAAHKE</sequence>
<protein>
    <recommendedName>
        <fullName evidence="1">Putative septation protein SpoVG</fullName>
    </recommendedName>
</protein>